<proteinExistence type="evidence at transcript level"/>
<keyword id="KW-0067">ATP-binding</keyword>
<keyword id="KW-0472">Membrane</keyword>
<keyword id="KW-0547">Nucleotide-binding</keyword>
<keyword id="KW-0812">Transmembrane</keyword>
<keyword id="KW-1133">Transmembrane helix</keyword>
<keyword id="KW-0813">Transport</keyword>
<feature type="chain" id="PRO_0000452923" description="ABC-type transporter eriD">
    <location>
        <begin position="1"/>
        <end position="1456"/>
    </location>
</feature>
<feature type="transmembrane region" description="Helical" evidence="1">
    <location>
        <begin position="481"/>
        <end position="501"/>
    </location>
</feature>
<feature type="transmembrane region" description="Helical" evidence="1">
    <location>
        <begin position="515"/>
        <end position="535"/>
    </location>
</feature>
<feature type="transmembrane region" description="Helical" evidence="1">
    <location>
        <begin position="561"/>
        <end position="581"/>
    </location>
</feature>
<feature type="transmembrane region" description="Helical" evidence="1">
    <location>
        <begin position="590"/>
        <end position="610"/>
    </location>
</feature>
<feature type="transmembrane region" description="Helical" evidence="1">
    <location>
        <begin position="623"/>
        <end position="643"/>
    </location>
</feature>
<feature type="transmembrane region" description="Helical" evidence="1">
    <location>
        <begin position="734"/>
        <end position="754"/>
    </location>
</feature>
<feature type="transmembrane region" description="Helical" evidence="1">
    <location>
        <begin position="1148"/>
        <end position="1168"/>
    </location>
</feature>
<feature type="transmembrane region" description="Helical" evidence="1">
    <location>
        <begin position="1184"/>
        <end position="1204"/>
    </location>
</feature>
<feature type="transmembrane region" description="Helical" evidence="1">
    <location>
        <begin position="1233"/>
        <end position="1253"/>
    </location>
</feature>
<feature type="transmembrane region" description="Helical" evidence="1">
    <location>
        <begin position="1269"/>
        <end position="1289"/>
    </location>
</feature>
<feature type="transmembrane region" description="Helical" evidence="1">
    <location>
        <begin position="1301"/>
        <end position="1321"/>
    </location>
</feature>
<feature type="transmembrane region" description="Helical" evidence="1">
    <location>
        <begin position="1337"/>
        <end position="1357"/>
    </location>
</feature>
<feature type="transmembrane region" description="Helical" evidence="1">
    <location>
        <begin position="1423"/>
        <end position="1443"/>
    </location>
</feature>
<feature type="domain" description="ABC transporter 1" evidence="2">
    <location>
        <begin position="118"/>
        <end position="372"/>
    </location>
</feature>
<feature type="domain" description="ABC transporter 2" evidence="2">
    <location>
        <begin position="813"/>
        <end position="1056"/>
    </location>
</feature>
<feature type="region of interest" description="Disordered" evidence="3">
    <location>
        <begin position="1"/>
        <end position="65"/>
    </location>
</feature>
<feature type="region of interest" description="Disordered" evidence="3">
    <location>
        <begin position="775"/>
        <end position="799"/>
    </location>
</feature>
<feature type="compositionally biased region" description="Polar residues" evidence="3">
    <location>
        <begin position="30"/>
        <end position="40"/>
    </location>
</feature>
<feature type="binding site" evidence="2">
    <location>
        <begin position="849"/>
        <end position="856"/>
    </location>
    <ligand>
        <name>ATP</name>
        <dbReference type="ChEBI" id="CHEBI:30616"/>
    </ligand>
</feature>
<organism>
    <name type="scientific">Hericium erinaceus</name>
    <name type="common">Lion's mane mushroom</name>
    <name type="synonym">Hydnum erinaceus</name>
    <dbReference type="NCBI Taxonomy" id="91752"/>
    <lineage>
        <taxon>Eukaryota</taxon>
        <taxon>Fungi</taxon>
        <taxon>Dikarya</taxon>
        <taxon>Basidiomycota</taxon>
        <taxon>Agaricomycotina</taxon>
        <taxon>Agaricomycetes</taxon>
        <taxon>Russulales</taxon>
        <taxon>Hericiaceae</taxon>
        <taxon>Hericium</taxon>
    </lineage>
</organism>
<comment type="function">
    <text evidence="4 5">ABC-type transporter; part of the gene cluster that mediates the biosynthesis of erinacines, cyathane-xylosides that show unique biological activities, including leishmanicidal activity, stimulating activity for nerve growth-factor synthesis, and agonistic activity toward the kappa opioid receptor.</text>
</comment>
<comment type="subcellular location">
    <subcellularLocation>
        <location evidence="1">Membrane</location>
        <topology evidence="1">Multi-pass membrane protein</topology>
    </subcellularLocation>
</comment>
<comment type="similarity">
    <text evidence="7">Belongs to the ABC transporter superfamily. ABCG family. PDR (TC 3.A.1.205) subfamily.</text>
</comment>
<evidence type="ECO:0000255" key="1"/>
<evidence type="ECO:0000255" key="2">
    <source>
        <dbReference type="PROSITE-ProRule" id="PRU00434"/>
    </source>
</evidence>
<evidence type="ECO:0000256" key="3">
    <source>
        <dbReference type="SAM" id="MobiDB-lite"/>
    </source>
</evidence>
<evidence type="ECO:0000269" key="4">
    <source>
    </source>
</evidence>
<evidence type="ECO:0000269" key="5">
    <source>
    </source>
</evidence>
<evidence type="ECO:0000303" key="6">
    <source>
    </source>
</evidence>
<evidence type="ECO:0000305" key="7"/>
<name>ERID_HERER</name>
<protein>
    <recommendedName>
        <fullName evidence="6">ABC-type transporter eriD</fullName>
    </recommendedName>
    <alternativeName>
        <fullName evidence="6">Erinacine biosynthesis cluster protein D</fullName>
    </alternativeName>
</protein>
<sequence length="1456" mass="162910">MAENEKVTYGGALPPSPSTADTEVAALARSMTNASRSSVYSPEKPDGTNPFLGTDDPRMDPLSGKFEPERWTKAILQLQSSDPEGYPHHTAAVSFSDLSVYGYGRPTDHQKTVGNYFLDIPGLARDILGRKGQRIDILRNFEGVIRESEMLVVLGRPGSGCTTLLKTIAGETHGFWITDNSHINYQGISFKRMHKQFRGEVIYNAENDVHFPNMTVGQTLRFAAEARTPRTRLPGVSRSQWAEHMKDVVMSIFGLTHTVNTKVGNDFVRGVSGGERKRVSIAEVALSGSPLQCWDNSTRGLDSATALEFVKSLRLSSKYAGATAVVAIYQASQAIYDLFDKVVVLYEGQQIYFGRADRAKQFFIDMGFECPPRQTTADFLTSLTNPGECLPRPGFEGRVPRTADEFAAAWRNSRDRQELLQEIERFNDEFPEDGEHLEKFKKARKLIQAKGSQSPYTLSTPMQIRLCLKRAWQRFMADTSNFLTSVIGNFILALIISSIFYNLPQNTLSFYSRGALLFFAILMNAFASSLEILQIYEQRPIVEKHKRMALYHPYADAIASVLCDLPGKVIASFAFNLVLYFMTNLRRTPGAFFTFYLFSLMCILVMSMIFRTIGATSKTISQAMAPSSVILLALVIFTGFTIPTRDMLGWSRWINYINPIGYAFESIMVNEFDGREYACGDFIPTGPGYTDVPATSRVCASAGAVFGSDVVEGAAYIATAYEYFPQHKWRNLGILFGFIAFFACTYLFATEFIAASKSKGEVLVFRRGHVPLKKEGASEDEEAGTGSTGTRTQEEPVDKDANIAGIQRQVATFHWEDVIYDIKIKGQPRRILDHVDGWVRPGTLTALMGASGAGKTTLLDTLANRVTMGVVEGKMQVDGHDRDSSFQRNTGYVQQQDLHLQTSTVREAMLFSARLRQPHTVPDAEKAAYVEEVIHLLEMQKYADAIVGVPGEGLNVEQRKRLTIGVELVAKPQLLLFLDEPTSGLDSQTAWSICTLLRKLANNGQAILCTIHQPSAMLFQSFDRLLLLQRGGQTVYFGDIGENSRTIIDYFEGQGADPCPHSANPAEWMLSVIGAAPGAVAKRDYYEAWRGSEAYRAVKEELRQMRENPKPISQESTDALRVYAAPFHVQLFHVTFRFYQQLYRTPSYIYSKIFLVAGSNLLIGFSFFNAHNTIQGLQNQMYSVFMGLTVFGNLVNQIMPHFVTQRSLYEVRERPSRAYSWVVFMLSNVLGELPWNTLAGVVLFFCWYYPVGMYRNAEVTHAVTERGGLMFLLIWQFMLFTSTFAHMLIAGVDSDVTGGNIASLLFSLTFLFCGVLAGPSGPNAFPRFWIFMYRLSPFTYLVEAMVSVGVANAPAFCSDIEVRHFEPPSGETCGQYLQQYMSVNDGSLANPNATADCQFCQQTTTNSFLTGIHSSYAHRWRNFGFLWVFILFNIGMAVFFYWLARVPKGSRVKKQK</sequence>
<accession>A0A1V0QSE4</accession>
<dbReference type="EMBL" id="KY683779">
    <property type="protein sequence ID" value="ARE72241.1"/>
    <property type="molecule type" value="mRNA"/>
</dbReference>
<dbReference type="SMR" id="A0A1V0QSE4"/>
<dbReference type="GO" id="GO:0016020">
    <property type="term" value="C:membrane"/>
    <property type="evidence" value="ECO:0007669"/>
    <property type="project" value="UniProtKB-SubCell"/>
</dbReference>
<dbReference type="GO" id="GO:0140359">
    <property type="term" value="F:ABC-type transporter activity"/>
    <property type="evidence" value="ECO:0007669"/>
    <property type="project" value="InterPro"/>
</dbReference>
<dbReference type="GO" id="GO:0005524">
    <property type="term" value="F:ATP binding"/>
    <property type="evidence" value="ECO:0007669"/>
    <property type="project" value="UniProtKB-KW"/>
</dbReference>
<dbReference type="GO" id="GO:0016887">
    <property type="term" value="F:ATP hydrolysis activity"/>
    <property type="evidence" value="ECO:0007669"/>
    <property type="project" value="InterPro"/>
</dbReference>
<dbReference type="CDD" id="cd03233">
    <property type="entry name" value="ABCG_PDR_domain1"/>
    <property type="match status" value="1"/>
</dbReference>
<dbReference type="CDD" id="cd03232">
    <property type="entry name" value="ABCG_PDR_domain2"/>
    <property type="match status" value="1"/>
</dbReference>
<dbReference type="FunFam" id="3.40.50.300:FF:000881">
    <property type="entry name" value="ABC multidrug transporter A-1"/>
    <property type="match status" value="1"/>
</dbReference>
<dbReference type="FunFam" id="3.40.50.300:FF:000054">
    <property type="entry name" value="ABC multidrug transporter atrF"/>
    <property type="match status" value="1"/>
</dbReference>
<dbReference type="Gene3D" id="3.40.50.300">
    <property type="entry name" value="P-loop containing nucleotide triphosphate hydrolases"/>
    <property type="match status" value="2"/>
</dbReference>
<dbReference type="InterPro" id="IPR003593">
    <property type="entry name" value="AAA+_ATPase"/>
</dbReference>
<dbReference type="InterPro" id="IPR013525">
    <property type="entry name" value="ABC2_TM"/>
</dbReference>
<dbReference type="InterPro" id="IPR029481">
    <property type="entry name" value="ABC_trans_N"/>
</dbReference>
<dbReference type="InterPro" id="IPR003439">
    <property type="entry name" value="ABC_transporter-like_ATP-bd"/>
</dbReference>
<dbReference type="InterPro" id="IPR017871">
    <property type="entry name" value="ABC_transporter-like_CS"/>
</dbReference>
<dbReference type="InterPro" id="IPR043926">
    <property type="entry name" value="ABCG_dom"/>
</dbReference>
<dbReference type="InterPro" id="IPR034001">
    <property type="entry name" value="ABCG_PDR_1"/>
</dbReference>
<dbReference type="InterPro" id="IPR034003">
    <property type="entry name" value="ABCG_PDR_2"/>
</dbReference>
<dbReference type="InterPro" id="IPR027417">
    <property type="entry name" value="P-loop_NTPase"/>
</dbReference>
<dbReference type="InterPro" id="IPR010929">
    <property type="entry name" value="PDR_CDR_ABC"/>
</dbReference>
<dbReference type="PANTHER" id="PTHR19241">
    <property type="entry name" value="ATP-BINDING CASSETTE TRANSPORTER"/>
    <property type="match status" value="1"/>
</dbReference>
<dbReference type="Pfam" id="PF01061">
    <property type="entry name" value="ABC2_membrane"/>
    <property type="match status" value="2"/>
</dbReference>
<dbReference type="Pfam" id="PF19055">
    <property type="entry name" value="ABC2_membrane_7"/>
    <property type="match status" value="1"/>
</dbReference>
<dbReference type="Pfam" id="PF00005">
    <property type="entry name" value="ABC_tran"/>
    <property type="match status" value="2"/>
</dbReference>
<dbReference type="Pfam" id="PF14510">
    <property type="entry name" value="ABC_trans_N"/>
    <property type="match status" value="1"/>
</dbReference>
<dbReference type="Pfam" id="PF06422">
    <property type="entry name" value="PDR_CDR"/>
    <property type="match status" value="1"/>
</dbReference>
<dbReference type="SMART" id="SM00382">
    <property type="entry name" value="AAA"/>
    <property type="match status" value="2"/>
</dbReference>
<dbReference type="SUPFAM" id="SSF52540">
    <property type="entry name" value="P-loop containing nucleoside triphosphate hydrolases"/>
    <property type="match status" value="2"/>
</dbReference>
<dbReference type="PROSITE" id="PS00211">
    <property type="entry name" value="ABC_TRANSPORTER_1"/>
    <property type="match status" value="1"/>
</dbReference>
<dbReference type="PROSITE" id="PS50893">
    <property type="entry name" value="ABC_TRANSPORTER_2"/>
    <property type="match status" value="2"/>
</dbReference>
<reference key="1">
    <citation type="journal article" date="2017" name="Angew. Chem. Int. Ed.">
        <title>Discovery and characterization of a new family of diterpene cyclases in bacteria and fungi.</title>
        <authorList>
            <person name="Yang Y.L."/>
            <person name="Zhang S."/>
            <person name="Ma K."/>
            <person name="Xu Y."/>
            <person name="Tao Q."/>
            <person name="Chen Y."/>
            <person name="Chen J."/>
            <person name="Guo S."/>
            <person name="Ren J."/>
            <person name="Wang W."/>
            <person name="Tao Y."/>
            <person name="Yin W.B."/>
            <person name="Liu H."/>
        </authorList>
    </citation>
    <scope>NUCLEOTIDE SEQUENCE [MRNA]</scope>
    <scope>FUNCTION</scope>
</reference>
<reference key="2">
    <citation type="journal article" date="2019" name="J. Am. Chem. Soc.">
        <title>Efficient reconstitution of basidiomycota diterpene erinacine gene cluster in ascomycota host Aspergillus oryzae based on genomic DNA sequences.</title>
        <authorList>
            <person name="Liu C."/>
            <person name="Minami A."/>
            <person name="Ozaki T."/>
            <person name="Wu J."/>
            <person name="Kawagishi H."/>
            <person name="Maruyama J.I."/>
            <person name="Oikawa H."/>
        </authorList>
    </citation>
    <scope>FUNCTION</scope>
</reference>
<gene>
    <name evidence="6" type="primary">eriD</name>
</gene>